<organism>
    <name type="scientific">Aeropyrum pernix (strain ATCC 700893 / DSM 11879 / JCM 9820 / NBRC 100138 / K1)</name>
    <dbReference type="NCBI Taxonomy" id="272557"/>
    <lineage>
        <taxon>Archaea</taxon>
        <taxon>Thermoproteota</taxon>
        <taxon>Thermoprotei</taxon>
        <taxon>Desulfurococcales</taxon>
        <taxon>Desulfurococcaceae</taxon>
        <taxon>Aeropyrum</taxon>
    </lineage>
</organism>
<name>RISC_AERPE</name>
<accession>Q9YDC5</accession>
<gene>
    <name type="primary">ribC</name>
    <name type="ordered locus">APE_0988</name>
</gene>
<evidence type="ECO:0000305" key="1"/>
<protein>
    <recommendedName>
        <fullName>Riboflavin synthase</fullName>
        <ecNumber>2.5.1.9</ecNumber>
    </recommendedName>
</protein>
<sequence length="155" mass="16576">MGKCVGVADTTFARVDMGSVAEEVLRRRLPGYRIVRHTVPGIKDLPGAAKRILSMGCEGVITLGWVGRREADKLSYLAASVGLIMVEVLTGKIVIDVTVHEDEAEAPEELAAIAVDRARKHAENLAALIREGPEALVKHAGMGLRQGYPDAGPIK</sequence>
<feature type="chain" id="PRO_0000134858" description="Riboflavin synthase">
    <location>
        <begin position="1"/>
        <end position="155"/>
    </location>
</feature>
<dbReference type="EC" id="2.5.1.9"/>
<dbReference type="EMBL" id="BA000002">
    <property type="protein sequence ID" value="BAA79972.1"/>
    <property type="molecule type" value="Genomic_DNA"/>
</dbReference>
<dbReference type="PIR" id="D72696">
    <property type="entry name" value="D72696"/>
</dbReference>
<dbReference type="SMR" id="Q9YDC5"/>
<dbReference type="STRING" id="272557.APE_0988"/>
<dbReference type="EnsemblBacteria" id="BAA79972">
    <property type="protein sequence ID" value="BAA79972"/>
    <property type="gene ID" value="APE_0988"/>
</dbReference>
<dbReference type="KEGG" id="ape:APE_0988"/>
<dbReference type="PATRIC" id="fig|272557.25.peg.715"/>
<dbReference type="eggNOG" id="arCOG01322">
    <property type="taxonomic scope" value="Archaea"/>
</dbReference>
<dbReference type="UniPathway" id="UPA00275">
    <property type="reaction ID" value="UER00405"/>
</dbReference>
<dbReference type="Proteomes" id="UP000002518">
    <property type="component" value="Chromosome"/>
</dbReference>
<dbReference type="GO" id="GO:0009349">
    <property type="term" value="C:riboflavin synthase complex"/>
    <property type="evidence" value="ECO:0007669"/>
    <property type="project" value="InterPro"/>
</dbReference>
<dbReference type="GO" id="GO:0004746">
    <property type="term" value="F:riboflavin synthase activity"/>
    <property type="evidence" value="ECO:0007669"/>
    <property type="project" value="UniProtKB-EC"/>
</dbReference>
<dbReference type="GO" id="GO:0009231">
    <property type="term" value="P:riboflavin biosynthetic process"/>
    <property type="evidence" value="ECO:0007669"/>
    <property type="project" value="UniProtKB-UniPathway"/>
</dbReference>
<dbReference type="CDD" id="cd09210">
    <property type="entry name" value="Riboflavin_synthase_archaeal"/>
    <property type="match status" value="1"/>
</dbReference>
<dbReference type="Gene3D" id="3.40.50.960">
    <property type="entry name" value="Lumazine/riboflavin synthase"/>
    <property type="match status" value="1"/>
</dbReference>
<dbReference type="InterPro" id="IPR002180">
    <property type="entry name" value="LS/RS"/>
</dbReference>
<dbReference type="InterPro" id="IPR036467">
    <property type="entry name" value="LS/RS_sf"/>
</dbReference>
<dbReference type="InterPro" id="IPR006399">
    <property type="entry name" value="Ribfl_synth_arc"/>
</dbReference>
<dbReference type="NCBIfam" id="TIGR01506">
    <property type="entry name" value="ribC_arch"/>
    <property type="match status" value="1"/>
</dbReference>
<dbReference type="Pfam" id="PF00885">
    <property type="entry name" value="DMRL_synthase"/>
    <property type="match status" value="1"/>
</dbReference>
<dbReference type="PIRSF" id="PIRSF015750">
    <property type="entry name" value="Ribfl_synth_arc"/>
    <property type="match status" value="1"/>
</dbReference>
<dbReference type="SUPFAM" id="SSF52121">
    <property type="entry name" value="Lumazine synthase"/>
    <property type="match status" value="1"/>
</dbReference>
<reference key="1">
    <citation type="journal article" date="1999" name="DNA Res.">
        <title>Complete genome sequence of an aerobic hyper-thermophilic crenarchaeon, Aeropyrum pernix K1.</title>
        <authorList>
            <person name="Kawarabayasi Y."/>
            <person name="Hino Y."/>
            <person name="Horikawa H."/>
            <person name="Yamazaki S."/>
            <person name="Haikawa Y."/>
            <person name="Jin-no K."/>
            <person name="Takahashi M."/>
            <person name="Sekine M."/>
            <person name="Baba S."/>
            <person name="Ankai A."/>
            <person name="Kosugi H."/>
            <person name="Hosoyama A."/>
            <person name="Fukui S."/>
            <person name="Nagai Y."/>
            <person name="Nishijima K."/>
            <person name="Nakazawa H."/>
            <person name="Takamiya M."/>
            <person name="Masuda S."/>
            <person name="Funahashi T."/>
            <person name="Tanaka T."/>
            <person name="Kudoh Y."/>
            <person name="Yamazaki J."/>
            <person name="Kushida N."/>
            <person name="Oguchi A."/>
            <person name="Aoki K."/>
            <person name="Kubota K."/>
            <person name="Nakamura Y."/>
            <person name="Nomura N."/>
            <person name="Sako Y."/>
            <person name="Kikuchi H."/>
        </authorList>
    </citation>
    <scope>NUCLEOTIDE SEQUENCE [LARGE SCALE GENOMIC DNA]</scope>
    <source>
        <strain>ATCC 700893 / DSM 11879 / JCM 9820 / NBRC 100138 / K1</strain>
    </source>
</reference>
<keyword id="KW-1185">Reference proteome</keyword>
<keyword id="KW-0686">Riboflavin biosynthesis</keyword>
<keyword id="KW-0808">Transferase</keyword>
<proteinExistence type="inferred from homology"/>
<comment type="catalytic activity">
    <reaction>
        <text>2 6,7-dimethyl-8-(1-D-ribityl)lumazine + H(+) = 5-amino-6-(D-ribitylamino)uracil + riboflavin</text>
        <dbReference type="Rhea" id="RHEA:20772"/>
        <dbReference type="ChEBI" id="CHEBI:15378"/>
        <dbReference type="ChEBI" id="CHEBI:15934"/>
        <dbReference type="ChEBI" id="CHEBI:57986"/>
        <dbReference type="ChEBI" id="CHEBI:58201"/>
        <dbReference type="EC" id="2.5.1.9"/>
    </reaction>
</comment>
<comment type="pathway">
    <text>Cofactor biosynthesis; riboflavin biosynthesis; riboflavin from 2-hydroxy-3-oxobutyl phosphate and 5-amino-6-(D-ribitylamino)uracil: step 2/2.</text>
</comment>
<comment type="similarity">
    <text evidence="1">Belongs to the DMRL synthase family.</text>
</comment>